<feature type="chain" id="PRO_0000437361" description="Methyltransferase FUS9">
    <location>
        <begin position="1"/>
        <end position="355"/>
    </location>
</feature>
<feature type="binding site" evidence="1">
    <location>
        <position position="18"/>
    </location>
    <ligand>
        <name>S-adenosyl-L-homocysteine</name>
        <dbReference type="ChEBI" id="CHEBI:57856"/>
    </ligand>
</feature>
<feature type="binding site" evidence="1">
    <location>
        <position position="63"/>
    </location>
    <ligand>
        <name>S-adenosyl-L-homocysteine</name>
        <dbReference type="ChEBI" id="CHEBI:57856"/>
    </ligand>
</feature>
<feature type="binding site" evidence="1">
    <location>
        <position position="86"/>
    </location>
    <ligand>
        <name>S-adenosyl-L-homocysteine</name>
        <dbReference type="ChEBI" id="CHEBI:57856"/>
    </ligand>
</feature>
<feature type="binding site" evidence="1">
    <location>
        <position position="123"/>
    </location>
    <ligand>
        <name>S-adenosyl-L-homocysteine</name>
        <dbReference type="ChEBI" id="CHEBI:57856"/>
    </ligand>
</feature>
<feature type="binding site" evidence="1">
    <location>
        <position position="124"/>
    </location>
    <ligand>
        <name>S-adenosyl-L-homocysteine</name>
        <dbReference type="ChEBI" id="CHEBI:57856"/>
    </ligand>
</feature>
<feature type="binding site" evidence="2">
    <location>
        <position position="231"/>
    </location>
    <ligand>
        <name>Mg(2+)</name>
        <dbReference type="ChEBI" id="CHEBI:18420"/>
    </ligand>
</feature>
<comment type="function">
    <text evidence="4">Methyltransferase; part of the gene cluster that mediates the biosynthesis of the mycotoxin fusarin C (PubMed:23932525). Within the cluster, FUS1, FUS2, FUS8 and FUS9 are sufficient for fusarin production (PubMed:23932525). The roles of the other FUS members are yet undetermined (PubMed:23932525). The fusarin C synthetase FUS1 is responsible for the condensation of one acetyl-coenzyme A (CoA) unit with six malonyl-CoA units and the amide linkage of the arising heptaketide and homoserine, subsequently releasing the first intermediate, prefusarin, as an alcohol with an open ring structure (PubMed:23932525). The cytochrome P450 monooxygenase FUS8 participates in multiple oxidation processes at carbon C-20 and is able to use the FUS1 product as substrate, resulting in formation of 20-hydroxy-prefusarin (PubMed:23932525). This reaction seems to be essential before the 2-pyrrolidone ring closure can be catalyzed by FUS2, generating 20-hydroxy-fusarin (PubMed:23932525). FUS8 is able to further oxidizes carbon C-20 after ring closure, resulting in the formation of carboxy-fusarin C (PubMed:23932525). As the last step, FUS9 methylates the hydroxyl group at C-21 to generate fusarin C (PubMed:23932525). Fusarin C can then rearrange to epi-fusarin C, the (z)-isomers, and fusarin A and fusarin D (PubMed:23932525).</text>
</comment>
<comment type="cofactor">
    <cofactor evidence="2">
        <name>Mg(2+)</name>
        <dbReference type="ChEBI" id="CHEBI:18420"/>
    </cofactor>
    <text evidence="2">Binds 1 Mg(2+) ion per subunit.</text>
</comment>
<comment type="pathway">
    <text evidence="4">Mycotoxin biosynthesis.</text>
</comment>
<comment type="induction">
    <text evidence="3 4">Expressed under high amounts of nitrogen via regulation by GLN1 (PubMed:23932525). Moreover, components of the fungal-specific velvet complex VEL1, VEL2 and LAE1 act also as positive regulators of expression (PubMed:20572938, PubMed:23932525). Finally, expression is induced under acidic conditions in a PACC-independent manner (PubMed:23932525).</text>
</comment>
<comment type="disruption phenotype">
    <text evidence="4">Accumulates carboxy-fusarins (PubMed:23932525).</text>
</comment>
<comment type="similarity">
    <text evidence="6">Belongs to the methyltransferase superfamily. Type-7 methyltransferase family.</text>
</comment>
<protein>
    <recommendedName>
        <fullName evidence="5">Methyltransferase FUS9</fullName>
        <ecNumber evidence="7">2.1.1.-</ecNumber>
    </recommendedName>
    <alternativeName>
        <fullName evidence="5">Fusarin biosynthesis protein 9</fullName>
    </alternativeName>
</protein>
<reference key="1">
    <citation type="journal article" date="2013" name="PLoS Pathog.">
        <title>Deciphering the cryptic genome: genome-wide analyses of the rice pathogen Fusarium fujikuroi reveal complex regulation of secondary metabolism and novel metabolites.</title>
        <authorList>
            <person name="Wiemann P."/>
            <person name="Sieber C.M.K."/>
            <person name="von Bargen K.W."/>
            <person name="Studt L."/>
            <person name="Niehaus E.-M."/>
            <person name="Espino J.J."/>
            <person name="Huss K."/>
            <person name="Michielse C.B."/>
            <person name="Albermann S."/>
            <person name="Wagner D."/>
            <person name="Bergner S.V."/>
            <person name="Connolly L.R."/>
            <person name="Fischer A."/>
            <person name="Reuter G."/>
            <person name="Kleigrewe K."/>
            <person name="Bald T."/>
            <person name="Wingfield B.D."/>
            <person name="Ophir R."/>
            <person name="Freeman S."/>
            <person name="Hippler M."/>
            <person name="Smith K.M."/>
            <person name="Brown D.W."/>
            <person name="Proctor R.H."/>
            <person name="Muensterkoetter M."/>
            <person name="Freitag M."/>
            <person name="Humpf H.-U."/>
            <person name="Gueldener U."/>
            <person name="Tudzynski B."/>
        </authorList>
    </citation>
    <scope>NUCLEOTIDE SEQUENCE [LARGE SCALE GENOMIC DNA]</scope>
    <source>
        <strain>CBS 195.34 / IMI 58289 / NRRL A-6831</strain>
    </source>
</reference>
<reference key="2">
    <citation type="journal article" date="2010" name="Mol. Microbiol.">
        <title>FfVel1 and FfLae1, components of a velvet-like complex in Fusarium fujikuroi, affect differentiation, secondary metabolism and virulence.</title>
        <authorList>
            <person name="Wiemann P."/>
            <person name="Brown D.W."/>
            <person name="Kleigrewe K."/>
            <person name="Bok J.W."/>
            <person name="Keller N.P."/>
            <person name="Humpf H.U."/>
            <person name="Tudzynski B."/>
        </authorList>
    </citation>
    <scope>INDUCTION</scope>
</reference>
<reference key="3">
    <citation type="journal article" date="2013" name="Chem. Biol.">
        <title>Genetic manipulation of the Fusarium fujikuroi fusarin gene cluster yields insight into the complex regulation and fusarin biosynthetic pathway.</title>
        <authorList>
            <person name="Niehaus E.M."/>
            <person name="Kleigrewe K."/>
            <person name="Wiemann P."/>
            <person name="Studt L."/>
            <person name="Sieber C.M."/>
            <person name="Connolly L.R."/>
            <person name="Freitag M."/>
            <person name="Gueldener U."/>
            <person name="Tudzynski B."/>
            <person name="Humpf H.U."/>
        </authorList>
    </citation>
    <scope>FUNCTION</scope>
    <scope>INDUCTION</scope>
    <scope>DISRUPTION PHENOTYPE</scope>
    <scope>CATALYTIC ACTIVITY</scope>
</reference>
<accession>S0EHD6</accession>
<keyword id="KW-0460">Magnesium</keyword>
<keyword id="KW-0479">Metal-binding</keyword>
<keyword id="KW-0489">Methyltransferase</keyword>
<keyword id="KW-1185">Reference proteome</keyword>
<keyword id="KW-0949">S-adenosyl-L-methionine</keyword>
<keyword id="KW-0808">Transferase</keyword>
<proteinExistence type="evidence at protein level"/>
<gene>
    <name evidence="5" type="primary">FUS9</name>
    <name type="ORF">FFUJ_10050</name>
</gene>
<sequence>MADKSHVNNVPMQGNGAYSSHAALQHEAMLKALPLFQAAAEVIANVDSTRISIVEYGSAHGNNSLEPMEAILKSIPTESLELLFSDRPENDFCTLSKTVTAWADGIVGNQLLNPLFISMIPRSFYQQVVPPKSAHLGFSLAALHHLDHVPQPTEDGQDESELLQQQAHVDLATFLKLRSQEIVSGGSLILSFVSQASAGYENYSGPVDACRNAMIEMVQQGKIPLSVAQAFRVPTYNRTLSDVKKVMDEFTQTWKVHDLFEDDVMHPAFHKLKIQSNPSLEASHKYAEVVIDWMMAVCSGYFTKALQVGSQGGYTKQEEEGLLQVWVTRTKEFFIRDYKDKEVICSFIYIRLERL</sequence>
<dbReference type="EC" id="2.1.1.-" evidence="7"/>
<dbReference type="EMBL" id="HF679031">
    <property type="protein sequence ID" value="CCT73267.1"/>
    <property type="molecule type" value="Genomic_DNA"/>
</dbReference>
<dbReference type="SMR" id="S0EHD6"/>
<dbReference type="STRING" id="1279085.S0EHD6"/>
<dbReference type="EnsemblFungi" id="CCT73267">
    <property type="protein sequence ID" value="CCT73267"/>
    <property type="gene ID" value="FFUJ_10050"/>
</dbReference>
<dbReference type="VEuPathDB" id="FungiDB:FFUJ_10050"/>
<dbReference type="HOGENOM" id="CLU_058489_0_0_1"/>
<dbReference type="BioCyc" id="MetaCyc:MONOMER-19360"/>
<dbReference type="Proteomes" id="UP000016800">
    <property type="component" value="Chromosome 9"/>
</dbReference>
<dbReference type="GO" id="GO:0046872">
    <property type="term" value="F:metal ion binding"/>
    <property type="evidence" value="ECO:0007669"/>
    <property type="project" value="UniProtKB-KW"/>
</dbReference>
<dbReference type="GO" id="GO:0008168">
    <property type="term" value="F:methyltransferase activity"/>
    <property type="evidence" value="ECO:0007669"/>
    <property type="project" value="UniProtKB-KW"/>
</dbReference>
<dbReference type="GO" id="GO:0032259">
    <property type="term" value="P:methylation"/>
    <property type="evidence" value="ECO:0007669"/>
    <property type="project" value="UniProtKB-KW"/>
</dbReference>
<dbReference type="Gene3D" id="1.10.1200.270">
    <property type="entry name" value="Methyltransferase, alpha-helical capping domain"/>
    <property type="match status" value="1"/>
</dbReference>
<dbReference type="Gene3D" id="3.40.50.150">
    <property type="entry name" value="Vaccinia Virus protein VP39"/>
    <property type="match status" value="1"/>
</dbReference>
<dbReference type="InterPro" id="IPR005299">
    <property type="entry name" value="MeTrfase_7"/>
</dbReference>
<dbReference type="InterPro" id="IPR042086">
    <property type="entry name" value="MeTrfase_capping"/>
</dbReference>
<dbReference type="InterPro" id="IPR029063">
    <property type="entry name" value="SAM-dependent_MTases_sf"/>
</dbReference>
<dbReference type="PANTHER" id="PTHR31009">
    <property type="entry name" value="S-ADENOSYL-L-METHIONINE:CARBOXYL METHYLTRANSFERASE FAMILY PROTEIN"/>
    <property type="match status" value="1"/>
</dbReference>
<dbReference type="Pfam" id="PF03492">
    <property type="entry name" value="Methyltransf_7"/>
    <property type="match status" value="1"/>
</dbReference>
<dbReference type="SUPFAM" id="SSF53335">
    <property type="entry name" value="S-adenosyl-L-methionine-dependent methyltransferases"/>
    <property type="match status" value="1"/>
</dbReference>
<evidence type="ECO:0000250" key="1">
    <source>
        <dbReference type="UniProtKB" id="A0A6C0WW36"/>
    </source>
</evidence>
<evidence type="ECO:0000250" key="2">
    <source>
        <dbReference type="UniProtKB" id="Q9FLN8"/>
    </source>
</evidence>
<evidence type="ECO:0000269" key="3">
    <source>
    </source>
</evidence>
<evidence type="ECO:0000269" key="4">
    <source>
    </source>
</evidence>
<evidence type="ECO:0000303" key="5">
    <source>
    </source>
</evidence>
<evidence type="ECO:0000305" key="6"/>
<evidence type="ECO:0000305" key="7">
    <source>
    </source>
</evidence>
<organism>
    <name type="scientific">Gibberella fujikuroi (strain CBS 195.34 / IMI 58289 / NRRL A-6831)</name>
    <name type="common">Bakanae and foot rot disease fungus</name>
    <name type="synonym">Fusarium fujikuroi</name>
    <dbReference type="NCBI Taxonomy" id="1279085"/>
    <lineage>
        <taxon>Eukaryota</taxon>
        <taxon>Fungi</taxon>
        <taxon>Dikarya</taxon>
        <taxon>Ascomycota</taxon>
        <taxon>Pezizomycotina</taxon>
        <taxon>Sordariomycetes</taxon>
        <taxon>Hypocreomycetidae</taxon>
        <taxon>Hypocreales</taxon>
        <taxon>Nectriaceae</taxon>
        <taxon>Fusarium</taxon>
        <taxon>Fusarium fujikuroi species complex</taxon>
    </lineage>
</organism>
<name>FUS9_GIBF5</name>